<accession>Q3JLK5</accession>
<evidence type="ECO:0000255" key="1">
    <source>
        <dbReference type="HAMAP-Rule" id="MF_00358"/>
    </source>
</evidence>
<evidence type="ECO:0000256" key="2">
    <source>
        <dbReference type="SAM" id="MobiDB-lite"/>
    </source>
</evidence>
<evidence type="ECO:0000305" key="3"/>
<feature type="chain" id="PRO_0000266641" description="Small ribosomal subunit protein bS21B">
    <location>
        <begin position="1"/>
        <end position="70"/>
    </location>
</feature>
<feature type="region of interest" description="Disordered" evidence="2">
    <location>
        <begin position="37"/>
        <end position="70"/>
    </location>
</feature>
<feature type="compositionally biased region" description="Basic residues" evidence="2">
    <location>
        <begin position="45"/>
        <end position="70"/>
    </location>
</feature>
<reference key="1">
    <citation type="journal article" date="2010" name="Genome Biol. Evol.">
        <title>Continuing evolution of Burkholderia mallei through genome reduction and large-scale rearrangements.</title>
        <authorList>
            <person name="Losada L."/>
            <person name="Ronning C.M."/>
            <person name="DeShazer D."/>
            <person name="Woods D."/>
            <person name="Fedorova N."/>
            <person name="Kim H.S."/>
            <person name="Shabalina S.A."/>
            <person name="Pearson T.R."/>
            <person name="Brinkac L."/>
            <person name="Tan P."/>
            <person name="Nandi T."/>
            <person name="Crabtree J."/>
            <person name="Badger J."/>
            <person name="Beckstrom-Sternberg S."/>
            <person name="Saqib M."/>
            <person name="Schutzer S.E."/>
            <person name="Keim P."/>
            <person name="Nierman W.C."/>
        </authorList>
    </citation>
    <scope>NUCLEOTIDE SEQUENCE [LARGE SCALE GENOMIC DNA]</scope>
    <source>
        <strain>1710b</strain>
    </source>
</reference>
<keyword id="KW-0687">Ribonucleoprotein</keyword>
<keyword id="KW-0689">Ribosomal protein</keyword>
<comment type="similarity">
    <text evidence="1">Belongs to the bacterial ribosomal protein bS21 family.</text>
</comment>
<sequence length="70" mass="8307">MTTIVLNPNEPVEVALRRFRRSIERTGLIKELRARTSYEKPTTERKRKKAAAVARLRKQVRRSMPPKKKY</sequence>
<protein>
    <recommendedName>
        <fullName evidence="1">Small ribosomal subunit protein bS21B</fullName>
    </recommendedName>
    <alternativeName>
        <fullName evidence="3">30S ribosomal protein S21 2</fullName>
    </alternativeName>
</protein>
<gene>
    <name evidence="1" type="primary">rpsU2</name>
    <name type="ordered locus">BURPS1710b_A0389</name>
</gene>
<dbReference type="EMBL" id="CP000125">
    <property type="protein sequence ID" value="ABA52848.1"/>
    <property type="molecule type" value="Genomic_DNA"/>
</dbReference>
<dbReference type="SMR" id="Q3JLK5"/>
<dbReference type="EnsemblBacteria" id="ABA52848">
    <property type="protein sequence ID" value="ABA52848"/>
    <property type="gene ID" value="BURPS1710b_A0389"/>
</dbReference>
<dbReference type="KEGG" id="bpm:BURPS1710b_A0389"/>
<dbReference type="HOGENOM" id="CLU_159258_1_1_4"/>
<dbReference type="Proteomes" id="UP000002700">
    <property type="component" value="Chromosome II"/>
</dbReference>
<dbReference type="GO" id="GO:1990904">
    <property type="term" value="C:ribonucleoprotein complex"/>
    <property type="evidence" value="ECO:0007669"/>
    <property type="project" value="UniProtKB-KW"/>
</dbReference>
<dbReference type="GO" id="GO:0005840">
    <property type="term" value="C:ribosome"/>
    <property type="evidence" value="ECO:0007669"/>
    <property type="project" value="UniProtKB-KW"/>
</dbReference>
<dbReference type="GO" id="GO:0003735">
    <property type="term" value="F:structural constituent of ribosome"/>
    <property type="evidence" value="ECO:0007669"/>
    <property type="project" value="InterPro"/>
</dbReference>
<dbReference type="GO" id="GO:0006412">
    <property type="term" value="P:translation"/>
    <property type="evidence" value="ECO:0007669"/>
    <property type="project" value="UniProtKB-UniRule"/>
</dbReference>
<dbReference type="Gene3D" id="1.20.5.1150">
    <property type="entry name" value="Ribosomal protein S8"/>
    <property type="match status" value="1"/>
</dbReference>
<dbReference type="HAMAP" id="MF_00358">
    <property type="entry name" value="Ribosomal_bS21"/>
    <property type="match status" value="1"/>
</dbReference>
<dbReference type="InterPro" id="IPR001911">
    <property type="entry name" value="Ribosomal_bS21"/>
</dbReference>
<dbReference type="InterPro" id="IPR038380">
    <property type="entry name" value="Ribosomal_bS21_sf"/>
</dbReference>
<dbReference type="NCBIfam" id="TIGR00030">
    <property type="entry name" value="S21p"/>
    <property type="match status" value="1"/>
</dbReference>
<dbReference type="PANTHER" id="PTHR21109">
    <property type="entry name" value="MITOCHONDRIAL 28S RIBOSOMAL PROTEIN S21"/>
    <property type="match status" value="1"/>
</dbReference>
<dbReference type="PANTHER" id="PTHR21109:SF22">
    <property type="entry name" value="SMALL RIBOSOMAL SUBUNIT PROTEIN BS21"/>
    <property type="match status" value="1"/>
</dbReference>
<dbReference type="Pfam" id="PF01165">
    <property type="entry name" value="Ribosomal_S21"/>
    <property type="match status" value="1"/>
</dbReference>
<dbReference type="PRINTS" id="PR00976">
    <property type="entry name" value="RIBOSOMALS21"/>
</dbReference>
<proteinExistence type="inferred from homology"/>
<organism>
    <name type="scientific">Burkholderia pseudomallei (strain 1710b)</name>
    <dbReference type="NCBI Taxonomy" id="320372"/>
    <lineage>
        <taxon>Bacteria</taxon>
        <taxon>Pseudomonadati</taxon>
        <taxon>Pseudomonadota</taxon>
        <taxon>Betaproteobacteria</taxon>
        <taxon>Burkholderiales</taxon>
        <taxon>Burkholderiaceae</taxon>
        <taxon>Burkholderia</taxon>
        <taxon>pseudomallei group</taxon>
    </lineage>
</organism>
<name>RS212_BURP1</name>